<comment type="function">
    <text evidence="1">The RuvA-RuvB-RuvC complex processes Holliday junction (HJ) DNA during genetic recombination and DNA repair. Endonuclease that resolves HJ intermediates. Cleaves cruciform DNA by making single-stranded nicks across the HJ at symmetrical positions within the homologous arms, yielding a 5'-phosphate and a 3'-hydroxyl group; requires a central core of homology in the junction. The consensus cleavage sequence is 5'-(A/T)TT(C/G)-3'. Cleavage occurs on the 3'-side of the TT dinucleotide at the point of strand exchange. HJ branch migration catalyzed by RuvA-RuvB allows RuvC to scan DNA until it finds its consensus sequence, where it cleaves and resolves the cruciform DNA.</text>
</comment>
<comment type="catalytic activity">
    <reaction evidence="1">
        <text>Endonucleolytic cleavage at a junction such as a reciprocal single-stranded crossover between two homologous DNA duplexes (Holliday junction).</text>
        <dbReference type="EC" id="3.1.21.10"/>
    </reaction>
</comment>
<comment type="cofactor">
    <cofactor evidence="1">
        <name>Mg(2+)</name>
        <dbReference type="ChEBI" id="CHEBI:18420"/>
    </cofactor>
    <text evidence="1">Binds 2 Mg(2+) ion per subunit.</text>
</comment>
<comment type="subunit">
    <text evidence="1">Homodimer which binds Holliday junction (HJ) DNA. The HJ becomes 2-fold symmetrical on binding to RuvC with unstacked arms; it has a different conformation from HJ DNA in complex with RuvA. In the full resolvosome a probable DNA-RuvA(4)-RuvB(12)-RuvC(2) complex forms which resolves the HJ.</text>
</comment>
<comment type="subcellular location">
    <subcellularLocation>
        <location evidence="1">Cytoplasm</location>
    </subcellularLocation>
</comment>
<comment type="similarity">
    <text evidence="1">Belongs to the RuvC family.</text>
</comment>
<name>RUVC_PROMS</name>
<protein>
    <recommendedName>
        <fullName evidence="1">Crossover junction endodeoxyribonuclease RuvC</fullName>
        <ecNumber evidence="1">3.1.21.10</ecNumber>
    </recommendedName>
    <alternativeName>
        <fullName evidence="1">Holliday junction nuclease RuvC</fullName>
    </alternativeName>
    <alternativeName>
        <fullName evidence="1">Holliday junction resolvase RuvC</fullName>
    </alternativeName>
</protein>
<proteinExistence type="inferred from homology"/>
<keyword id="KW-0963">Cytoplasm</keyword>
<keyword id="KW-0227">DNA damage</keyword>
<keyword id="KW-0233">DNA recombination</keyword>
<keyword id="KW-0234">DNA repair</keyword>
<keyword id="KW-0238">DNA-binding</keyword>
<keyword id="KW-0255">Endonuclease</keyword>
<keyword id="KW-0378">Hydrolase</keyword>
<keyword id="KW-0460">Magnesium</keyword>
<keyword id="KW-0479">Metal-binding</keyword>
<keyword id="KW-0540">Nuclease</keyword>
<dbReference type="EC" id="3.1.21.10" evidence="1"/>
<dbReference type="EMBL" id="CP000551">
    <property type="protein sequence ID" value="ABM70443.1"/>
    <property type="molecule type" value="Genomic_DNA"/>
</dbReference>
<dbReference type="RefSeq" id="WP_011818592.1">
    <property type="nucleotide sequence ID" value="NC_008816.1"/>
</dbReference>
<dbReference type="SMR" id="A2BRN2"/>
<dbReference type="STRING" id="146891.A9601_11591"/>
<dbReference type="KEGG" id="pmb:A9601_11591"/>
<dbReference type="eggNOG" id="COG0817">
    <property type="taxonomic scope" value="Bacteria"/>
</dbReference>
<dbReference type="HOGENOM" id="CLU_091257_3_1_3"/>
<dbReference type="OrthoDB" id="9805499at2"/>
<dbReference type="Proteomes" id="UP000002590">
    <property type="component" value="Chromosome"/>
</dbReference>
<dbReference type="GO" id="GO:0005737">
    <property type="term" value="C:cytoplasm"/>
    <property type="evidence" value="ECO:0007669"/>
    <property type="project" value="UniProtKB-SubCell"/>
</dbReference>
<dbReference type="GO" id="GO:0048476">
    <property type="term" value="C:Holliday junction resolvase complex"/>
    <property type="evidence" value="ECO:0007669"/>
    <property type="project" value="UniProtKB-UniRule"/>
</dbReference>
<dbReference type="GO" id="GO:0008821">
    <property type="term" value="F:crossover junction DNA endonuclease activity"/>
    <property type="evidence" value="ECO:0007669"/>
    <property type="project" value="UniProtKB-UniRule"/>
</dbReference>
<dbReference type="GO" id="GO:0003677">
    <property type="term" value="F:DNA binding"/>
    <property type="evidence" value="ECO:0007669"/>
    <property type="project" value="UniProtKB-KW"/>
</dbReference>
<dbReference type="GO" id="GO:0000287">
    <property type="term" value="F:magnesium ion binding"/>
    <property type="evidence" value="ECO:0007669"/>
    <property type="project" value="UniProtKB-UniRule"/>
</dbReference>
<dbReference type="GO" id="GO:0006310">
    <property type="term" value="P:DNA recombination"/>
    <property type="evidence" value="ECO:0007669"/>
    <property type="project" value="UniProtKB-UniRule"/>
</dbReference>
<dbReference type="GO" id="GO:0006281">
    <property type="term" value="P:DNA repair"/>
    <property type="evidence" value="ECO:0007669"/>
    <property type="project" value="UniProtKB-UniRule"/>
</dbReference>
<dbReference type="CDD" id="cd16962">
    <property type="entry name" value="RuvC"/>
    <property type="match status" value="1"/>
</dbReference>
<dbReference type="FunFam" id="3.30.420.10:FF:000002">
    <property type="entry name" value="Crossover junction endodeoxyribonuclease RuvC"/>
    <property type="match status" value="1"/>
</dbReference>
<dbReference type="Gene3D" id="3.30.420.10">
    <property type="entry name" value="Ribonuclease H-like superfamily/Ribonuclease H"/>
    <property type="match status" value="1"/>
</dbReference>
<dbReference type="HAMAP" id="MF_00034">
    <property type="entry name" value="RuvC"/>
    <property type="match status" value="1"/>
</dbReference>
<dbReference type="InterPro" id="IPR012337">
    <property type="entry name" value="RNaseH-like_sf"/>
</dbReference>
<dbReference type="InterPro" id="IPR036397">
    <property type="entry name" value="RNaseH_sf"/>
</dbReference>
<dbReference type="InterPro" id="IPR002176">
    <property type="entry name" value="X-over_junc_endoDNase_RuvC"/>
</dbReference>
<dbReference type="NCBIfam" id="NF000711">
    <property type="entry name" value="PRK00039.2-1"/>
    <property type="match status" value="1"/>
</dbReference>
<dbReference type="PANTHER" id="PTHR30194">
    <property type="entry name" value="CROSSOVER JUNCTION ENDODEOXYRIBONUCLEASE RUVC"/>
    <property type="match status" value="1"/>
</dbReference>
<dbReference type="PANTHER" id="PTHR30194:SF3">
    <property type="entry name" value="CROSSOVER JUNCTION ENDODEOXYRIBONUCLEASE RUVC"/>
    <property type="match status" value="1"/>
</dbReference>
<dbReference type="Pfam" id="PF02075">
    <property type="entry name" value="RuvC"/>
    <property type="match status" value="1"/>
</dbReference>
<dbReference type="PRINTS" id="PR00696">
    <property type="entry name" value="RSOLVASERUVC"/>
</dbReference>
<dbReference type="SUPFAM" id="SSF53098">
    <property type="entry name" value="Ribonuclease H-like"/>
    <property type="match status" value="1"/>
</dbReference>
<organism>
    <name type="scientific">Prochlorococcus marinus (strain AS9601)</name>
    <dbReference type="NCBI Taxonomy" id="146891"/>
    <lineage>
        <taxon>Bacteria</taxon>
        <taxon>Bacillati</taxon>
        <taxon>Cyanobacteriota</taxon>
        <taxon>Cyanophyceae</taxon>
        <taxon>Synechococcales</taxon>
        <taxon>Prochlorococcaceae</taxon>
        <taxon>Prochlorococcus</taxon>
    </lineage>
</organism>
<accession>A2BRN2</accession>
<sequence length="157" mass="17470">MRIIGIDPGLARVGYGIIEIENERKILLDCGVIETGKDKKEEDRLYEIFQDLNELINHWKPTVAAVEKFFFYRSSTTISVVQARGVIMMVLASKKIHVSEYSPAKIKLTIAGSGKASKKDILDAVMYNLDLDKPPKPDDSADALAIALTKLNEDGFN</sequence>
<feature type="chain" id="PRO_1000002797" description="Crossover junction endodeoxyribonuclease RuvC">
    <location>
        <begin position="1"/>
        <end position="157"/>
    </location>
</feature>
<feature type="active site" evidence="1">
    <location>
        <position position="7"/>
    </location>
</feature>
<feature type="active site" evidence="1">
    <location>
        <position position="67"/>
    </location>
</feature>
<feature type="active site" evidence="1">
    <location>
        <position position="139"/>
    </location>
</feature>
<feature type="binding site" evidence="1">
    <location>
        <position position="7"/>
    </location>
    <ligand>
        <name>Mg(2+)</name>
        <dbReference type="ChEBI" id="CHEBI:18420"/>
        <label>1</label>
    </ligand>
</feature>
<feature type="binding site" evidence="1">
    <location>
        <position position="67"/>
    </location>
    <ligand>
        <name>Mg(2+)</name>
        <dbReference type="ChEBI" id="CHEBI:18420"/>
        <label>2</label>
    </ligand>
</feature>
<feature type="binding site" evidence="1">
    <location>
        <position position="139"/>
    </location>
    <ligand>
        <name>Mg(2+)</name>
        <dbReference type="ChEBI" id="CHEBI:18420"/>
        <label>1</label>
    </ligand>
</feature>
<reference key="1">
    <citation type="journal article" date="2007" name="PLoS Genet.">
        <title>Patterns and implications of gene gain and loss in the evolution of Prochlorococcus.</title>
        <authorList>
            <person name="Kettler G.C."/>
            <person name="Martiny A.C."/>
            <person name="Huang K."/>
            <person name="Zucker J."/>
            <person name="Coleman M.L."/>
            <person name="Rodrigue S."/>
            <person name="Chen F."/>
            <person name="Lapidus A."/>
            <person name="Ferriera S."/>
            <person name="Johnson J."/>
            <person name="Steglich C."/>
            <person name="Church G.M."/>
            <person name="Richardson P."/>
            <person name="Chisholm S.W."/>
        </authorList>
    </citation>
    <scope>NUCLEOTIDE SEQUENCE [LARGE SCALE GENOMIC DNA]</scope>
    <source>
        <strain>AS9601</strain>
    </source>
</reference>
<gene>
    <name evidence="1" type="primary">ruvC</name>
    <name type="ordered locus">A9601_11591</name>
</gene>
<evidence type="ECO:0000255" key="1">
    <source>
        <dbReference type="HAMAP-Rule" id="MF_00034"/>
    </source>
</evidence>